<sequence length="58" mass="6510">MIYRNWSLLSSTVVIWGGVATAGLAGIFLFGGKEKFQNYLCREGERLRQQDRAAMGKN</sequence>
<evidence type="ECO:0000250" key="1">
    <source>
        <dbReference type="UniProtKB" id="Q9SKE0"/>
    </source>
</evidence>
<evidence type="ECO:0000305" key="2"/>
<evidence type="ECO:0000312" key="3">
    <source>
        <dbReference type="EMBL" id="BAF18560.1"/>
    </source>
</evidence>
<evidence type="ECO:0000312" key="4">
    <source>
        <dbReference type="EMBL" id="EEE65005.1"/>
    </source>
</evidence>
<comment type="pathway">
    <text evidence="1">Carbohydrate metabolism; tricarboxylic acid cycle.</text>
</comment>
<comment type="subunit">
    <text evidence="1">Component of complex II composed of eight subunits in plants: four classical SDH subunits SDH1, SDH2, SDH3 and SDH4 (a flavoprotein (FP), an iron-sulfur protein (IP), and a cytochrome b composed of a large and a small subunit.), as well as four subunits unknown in mitochondria from bacteria and heterotrophic eukaryotes.</text>
</comment>
<comment type="subcellular location">
    <subcellularLocation>
        <location evidence="1">Mitochondrion inner membrane</location>
        <topology evidence="1">Peripheral membrane protein</topology>
    </subcellularLocation>
</comment>
<comment type="sequence caution" evidence="2">
    <conflict type="erroneous initiation">
        <sequence resource="EMBL-CDS" id="BAF18560"/>
    </conflict>
    <text>Extended N-terminus.</text>
</comment>
<organism>
    <name type="scientific">Oryza sativa subsp. japonica</name>
    <name type="common">Rice</name>
    <dbReference type="NCBI Taxonomy" id="39947"/>
    <lineage>
        <taxon>Eukaryota</taxon>
        <taxon>Viridiplantae</taxon>
        <taxon>Streptophyta</taxon>
        <taxon>Embryophyta</taxon>
        <taxon>Tracheophyta</taxon>
        <taxon>Spermatophyta</taxon>
        <taxon>Magnoliopsida</taxon>
        <taxon>Liliopsida</taxon>
        <taxon>Poales</taxon>
        <taxon>Poaceae</taxon>
        <taxon>BOP clade</taxon>
        <taxon>Oryzoideae</taxon>
        <taxon>Oryzeae</taxon>
        <taxon>Oryzinae</taxon>
        <taxon>Oryza</taxon>
        <taxon>Oryza sativa</taxon>
    </lineage>
</organism>
<accession>Q0DF13</accession>
<accession>B9FR94</accession>
<reference key="1">
    <citation type="journal article" date="2005" name="Nature">
        <title>The map-based sequence of the rice genome.</title>
        <authorList>
            <consortium name="International rice genome sequencing project (IRGSP)"/>
        </authorList>
    </citation>
    <scope>NUCLEOTIDE SEQUENCE [LARGE SCALE GENOMIC DNA]</scope>
    <source>
        <strain>cv. Nipponbare</strain>
    </source>
</reference>
<reference key="2">
    <citation type="journal article" date="2008" name="Nucleic Acids Res.">
        <title>The rice annotation project database (RAP-DB): 2008 update.</title>
        <authorList>
            <consortium name="The rice annotation project (RAP)"/>
        </authorList>
    </citation>
    <scope>GENOME REANNOTATION</scope>
    <source>
        <strain>cv. Nipponbare</strain>
    </source>
</reference>
<reference key="3">
    <citation type="journal article" date="2013" name="Rice">
        <title>Improvement of the Oryza sativa Nipponbare reference genome using next generation sequence and optical map data.</title>
        <authorList>
            <person name="Kawahara Y."/>
            <person name="de la Bastide M."/>
            <person name="Hamilton J.P."/>
            <person name="Kanamori H."/>
            <person name="McCombie W.R."/>
            <person name="Ouyang S."/>
            <person name="Schwartz D.C."/>
            <person name="Tanaka T."/>
            <person name="Wu J."/>
            <person name="Zhou S."/>
            <person name="Childs K.L."/>
            <person name="Davidson R.M."/>
            <person name="Lin H."/>
            <person name="Quesada-Ocampo L."/>
            <person name="Vaillancourt B."/>
            <person name="Sakai H."/>
            <person name="Lee S.S."/>
            <person name="Kim J."/>
            <person name="Numa H."/>
            <person name="Itoh T."/>
            <person name="Buell C.R."/>
            <person name="Matsumoto T."/>
        </authorList>
    </citation>
    <scope>GENOME REANNOTATION</scope>
    <source>
        <strain>cv. Nipponbare</strain>
    </source>
</reference>
<reference key="4">
    <citation type="journal article" date="2005" name="PLoS Biol.">
        <title>The genomes of Oryza sativa: a history of duplications.</title>
        <authorList>
            <person name="Yu J."/>
            <person name="Wang J."/>
            <person name="Lin W."/>
            <person name="Li S."/>
            <person name="Li H."/>
            <person name="Zhou J."/>
            <person name="Ni P."/>
            <person name="Dong W."/>
            <person name="Hu S."/>
            <person name="Zeng C."/>
            <person name="Zhang J."/>
            <person name="Zhang Y."/>
            <person name="Li R."/>
            <person name="Xu Z."/>
            <person name="Li S."/>
            <person name="Li X."/>
            <person name="Zheng H."/>
            <person name="Cong L."/>
            <person name="Lin L."/>
            <person name="Yin J."/>
            <person name="Geng J."/>
            <person name="Li G."/>
            <person name="Shi J."/>
            <person name="Liu J."/>
            <person name="Lv H."/>
            <person name="Li J."/>
            <person name="Wang J."/>
            <person name="Deng Y."/>
            <person name="Ran L."/>
            <person name="Shi X."/>
            <person name="Wang X."/>
            <person name="Wu Q."/>
            <person name="Li C."/>
            <person name="Ren X."/>
            <person name="Wang J."/>
            <person name="Wang X."/>
            <person name="Li D."/>
            <person name="Liu D."/>
            <person name="Zhang X."/>
            <person name="Ji Z."/>
            <person name="Zhao W."/>
            <person name="Sun Y."/>
            <person name="Zhang Z."/>
            <person name="Bao J."/>
            <person name="Han Y."/>
            <person name="Dong L."/>
            <person name="Ji J."/>
            <person name="Chen P."/>
            <person name="Wu S."/>
            <person name="Liu J."/>
            <person name="Xiao Y."/>
            <person name="Bu D."/>
            <person name="Tan J."/>
            <person name="Yang L."/>
            <person name="Ye C."/>
            <person name="Zhang J."/>
            <person name="Xu J."/>
            <person name="Zhou Y."/>
            <person name="Yu Y."/>
            <person name="Zhang B."/>
            <person name="Zhuang S."/>
            <person name="Wei H."/>
            <person name="Liu B."/>
            <person name="Lei M."/>
            <person name="Yu H."/>
            <person name="Li Y."/>
            <person name="Xu H."/>
            <person name="Wei S."/>
            <person name="He X."/>
            <person name="Fang L."/>
            <person name="Zhang Z."/>
            <person name="Zhang Y."/>
            <person name="Huang X."/>
            <person name="Su Z."/>
            <person name="Tong W."/>
            <person name="Li J."/>
            <person name="Tong Z."/>
            <person name="Li S."/>
            <person name="Ye J."/>
            <person name="Wang L."/>
            <person name="Fang L."/>
            <person name="Lei T."/>
            <person name="Chen C.-S."/>
            <person name="Chen H.-C."/>
            <person name="Xu Z."/>
            <person name="Li H."/>
            <person name="Huang H."/>
            <person name="Zhang F."/>
            <person name="Xu H."/>
            <person name="Li N."/>
            <person name="Zhao C."/>
            <person name="Li S."/>
            <person name="Dong L."/>
            <person name="Huang Y."/>
            <person name="Li L."/>
            <person name="Xi Y."/>
            <person name="Qi Q."/>
            <person name="Li W."/>
            <person name="Zhang B."/>
            <person name="Hu W."/>
            <person name="Zhang Y."/>
            <person name="Tian X."/>
            <person name="Jiao Y."/>
            <person name="Liang X."/>
            <person name="Jin J."/>
            <person name="Gao L."/>
            <person name="Zheng W."/>
            <person name="Hao B."/>
            <person name="Liu S.-M."/>
            <person name="Wang W."/>
            <person name="Yuan L."/>
            <person name="Cao M."/>
            <person name="McDermott J."/>
            <person name="Samudrala R."/>
            <person name="Wang J."/>
            <person name="Wong G.K.-S."/>
            <person name="Yang H."/>
        </authorList>
    </citation>
    <scope>NUCLEOTIDE SEQUENCE [LARGE SCALE GENOMIC DNA]</scope>
    <source>
        <strain>cv. Nipponbare</strain>
    </source>
</reference>
<reference key="5">
    <citation type="journal article" date="2003" name="Science">
        <title>Collection, mapping, and annotation of over 28,000 cDNA clones from japonica rice.</title>
        <authorList>
            <consortium name="The rice full-length cDNA consortium"/>
        </authorList>
    </citation>
    <scope>NUCLEOTIDE SEQUENCE [LARGE SCALE MRNA]</scope>
    <source>
        <strain>cv. Nipponbare</strain>
    </source>
</reference>
<dbReference type="EMBL" id="AP001168">
    <property type="status" value="NOT_ANNOTATED_CDS"/>
    <property type="molecule type" value="Genomic_DNA"/>
</dbReference>
<dbReference type="EMBL" id="AP008212">
    <property type="protein sequence ID" value="BAF18560.1"/>
    <property type="status" value="ALT_INIT"/>
    <property type="molecule type" value="Genomic_DNA"/>
</dbReference>
<dbReference type="EMBL" id="AP014962">
    <property type="protein sequence ID" value="BAS95906.1"/>
    <property type="molecule type" value="Genomic_DNA"/>
</dbReference>
<dbReference type="EMBL" id="CM000143">
    <property type="protein sequence ID" value="EEE65005.1"/>
    <property type="molecule type" value="Genomic_DNA"/>
</dbReference>
<dbReference type="EMBL" id="AK062901">
    <property type="status" value="NOT_ANNOTATED_CDS"/>
    <property type="molecule type" value="mRNA"/>
</dbReference>
<dbReference type="FunCoup" id="Q0DF13">
    <property type="interactions" value="1"/>
</dbReference>
<dbReference type="STRING" id="39947.Q0DF13"/>
<dbReference type="PaxDb" id="39947-Q0DF13"/>
<dbReference type="EnsemblPlants" id="Os06t0124900-01">
    <property type="protein sequence ID" value="Os06t0124900-01"/>
    <property type="gene ID" value="Os06g0124900"/>
</dbReference>
<dbReference type="Gramene" id="Os06t0124900-01">
    <property type="protein sequence ID" value="Os06t0124900-01"/>
    <property type="gene ID" value="Os06g0124900"/>
</dbReference>
<dbReference type="KEGG" id="dosa:Os06g0124900"/>
<dbReference type="eggNOG" id="ENOG502T0JV">
    <property type="taxonomic scope" value="Eukaryota"/>
</dbReference>
<dbReference type="HOGENOM" id="CLU_192481_0_0_1"/>
<dbReference type="InParanoid" id="Q0DF13"/>
<dbReference type="OMA" id="LCHEGER"/>
<dbReference type="OrthoDB" id="728887at2759"/>
<dbReference type="UniPathway" id="UPA00223"/>
<dbReference type="Proteomes" id="UP000000763">
    <property type="component" value="Chromosome 6"/>
</dbReference>
<dbReference type="Proteomes" id="UP000007752">
    <property type="component" value="Chromosome 6"/>
</dbReference>
<dbReference type="Proteomes" id="UP000059680">
    <property type="component" value="Chromosome 6"/>
</dbReference>
<dbReference type="GO" id="GO:0005743">
    <property type="term" value="C:mitochondrial inner membrane"/>
    <property type="evidence" value="ECO:0007669"/>
    <property type="project" value="UniProtKB-SubCell"/>
</dbReference>
<dbReference type="GO" id="GO:0045273">
    <property type="term" value="C:respiratory chain complex II (succinate dehydrogenase)"/>
    <property type="evidence" value="ECO:0000314"/>
    <property type="project" value="UniProtKB"/>
</dbReference>
<dbReference type="GO" id="GO:0006099">
    <property type="term" value="P:tricarboxylic acid cycle"/>
    <property type="evidence" value="ECO:0007669"/>
    <property type="project" value="UniProtKB-UniPathway"/>
</dbReference>
<proteinExistence type="inferred from homology"/>
<protein>
    <recommendedName>
        <fullName evidence="2">Succinate dehydrogenase subunit 8A, mitochondrial</fullName>
    </recommendedName>
</protein>
<feature type="chain" id="PRO_0000431758" description="Succinate dehydrogenase subunit 8A, mitochondrial">
    <location>
        <begin position="1"/>
        <end position="58"/>
    </location>
</feature>
<gene>
    <name evidence="2" type="primary">SDH8A</name>
    <name evidence="3" type="ordered locus">Os06g0124900</name>
    <name evidence="2" type="ordered locus">LOC_Os06g03486</name>
    <name evidence="4" type="ORF">OsJ_19947</name>
</gene>
<keyword id="KW-0472">Membrane</keyword>
<keyword id="KW-0496">Mitochondrion</keyword>
<keyword id="KW-0999">Mitochondrion inner membrane</keyword>
<keyword id="KW-1185">Reference proteome</keyword>
<keyword id="KW-0816">Tricarboxylic acid cycle</keyword>
<name>SDH8A_ORYSJ</name>